<keyword id="KW-0150">Chloroplast</keyword>
<keyword id="KW-0251">Elongation factor</keyword>
<keyword id="KW-0342">GTP-binding</keyword>
<keyword id="KW-0378">Hydrolase</keyword>
<keyword id="KW-0460">Magnesium</keyword>
<keyword id="KW-0479">Metal-binding</keyword>
<keyword id="KW-0547">Nucleotide-binding</keyword>
<keyword id="KW-0934">Plastid</keyword>
<keyword id="KW-0648">Protein biosynthesis</keyword>
<keyword id="KW-1185">Reference proteome</keyword>
<proteinExistence type="inferred from homology"/>
<geneLocation type="chloroplast"/>
<evidence type="ECO:0000250" key="1"/>
<evidence type="ECO:0000255" key="2">
    <source>
        <dbReference type="HAMAP-Rule" id="MF_00118"/>
    </source>
</evidence>
<evidence type="ECO:0000305" key="3"/>
<dbReference type="EC" id="3.6.5.3" evidence="2"/>
<dbReference type="EMBL" id="AB002583">
    <property type="protein sequence ID" value="BAC76258.1"/>
    <property type="molecule type" value="Genomic_DNA"/>
</dbReference>
<dbReference type="RefSeq" id="NP_849096.1">
    <property type="nucleotide sequence ID" value="NC_004799.1"/>
</dbReference>
<dbReference type="SMR" id="Q85FT7"/>
<dbReference type="STRING" id="280699.Q85FT7"/>
<dbReference type="EnsemblPlants" id="CMV191CT">
    <property type="protein sequence ID" value="CMV191CT"/>
    <property type="gene ID" value="CMV191C"/>
</dbReference>
<dbReference type="GeneID" id="845061"/>
<dbReference type="Gramene" id="CMV191CT">
    <property type="protein sequence ID" value="CMV191CT"/>
    <property type="gene ID" value="CMV191C"/>
</dbReference>
<dbReference type="KEGG" id="cme:CymeCp164"/>
<dbReference type="eggNOG" id="KOG0460">
    <property type="taxonomic scope" value="Eukaryota"/>
</dbReference>
<dbReference type="HOGENOM" id="CLU_007265_0_0_1"/>
<dbReference type="Proteomes" id="UP000007014">
    <property type="component" value="Chloroplast"/>
</dbReference>
<dbReference type="GO" id="GO:0009507">
    <property type="term" value="C:chloroplast"/>
    <property type="evidence" value="ECO:0007669"/>
    <property type="project" value="UniProtKB-SubCell"/>
</dbReference>
<dbReference type="GO" id="GO:0005829">
    <property type="term" value="C:cytosol"/>
    <property type="evidence" value="ECO:0007669"/>
    <property type="project" value="TreeGrafter"/>
</dbReference>
<dbReference type="GO" id="GO:0005525">
    <property type="term" value="F:GTP binding"/>
    <property type="evidence" value="ECO:0007669"/>
    <property type="project" value="UniProtKB-UniRule"/>
</dbReference>
<dbReference type="GO" id="GO:0003924">
    <property type="term" value="F:GTPase activity"/>
    <property type="evidence" value="ECO:0007669"/>
    <property type="project" value="InterPro"/>
</dbReference>
<dbReference type="GO" id="GO:0003729">
    <property type="term" value="F:mRNA binding"/>
    <property type="evidence" value="ECO:0007669"/>
    <property type="project" value="EnsemblPlants"/>
</dbReference>
<dbReference type="GO" id="GO:0003746">
    <property type="term" value="F:translation elongation factor activity"/>
    <property type="evidence" value="ECO:0007669"/>
    <property type="project" value="UniProtKB-UniRule"/>
</dbReference>
<dbReference type="GO" id="GO:0009658">
    <property type="term" value="P:chloroplast organization"/>
    <property type="evidence" value="ECO:0007669"/>
    <property type="project" value="EnsemblPlants"/>
</dbReference>
<dbReference type="CDD" id="cd01884">
    <property type="entry name" value="EF_Tu"/>
    <property type="match status" value="1"/>
</dbReference>
<dbReference type="CDD" id="cd03697">
    <property type="entry name" value="EFTU_II"/>
    <property type="match status" value="1"/>
</dbReference>
<dbReference type="CDD" id="cd03707">
    <property type="entry name" value="EFTU_III"/>
    <property type="match status" value="1"/>
</dbReference>
<dbReference type="FunFam" id="2.40.30.10:FF:000001">
    <property type="entry name" value="Elongation factor Tu"/>
    <property type="match status" value="1"/>
</dbReference>
<dbReference type="FunFam" id="2.40.30.10:FF:000046">
    <property type="entry name" value="Elongation factor Tu"/>
    <property type="match status" value="1"/>
</dbReference>
<dbReference type="FunFam" id="3.40.50.300:FF:000003">
    <property type="entry name" value="Elongation factor Tu"/>
    <property type="match status" value="1"/>
</dbReference>
<dbReference type="Gene3D" id="3.40.50.300">
    <property type="entry name" value="P-loop containing nucleotide triphosphate hydrolases"/>
    <property type="match status" value="1"/>
</dbReference>
<dbReference type="Gene3D" id="2.40.30.10">
    <property type="entry name" value="Translation factors"/>
    <property type="match status" value="2"/>
</dbReference>
<dbReference type="HAMAP" id="MF_00118_B">
    <property type="entry name" value="EF_Tu_B"/>
    <property type="match status" value="1"/>
</dbReference>
<dbReference type="InterPro" id="IPR041709">
    <property type="entry name" value="EF-Tu_GTP-bd"/>
</dbReference>
<dbReference type="InterPro" id="IPR050055">
    <property type="entry name" value="EF-Tu_GTPase"/>
</dbReference>
<dbReference type="InterPro" id="IPR004161">
    <property type="entry name" value="EFTu-like_2"/>
</dbReference>
<dbReference type="InterPro" id="IPR033720">
    <property type="entry name" value="EFTU_2"/>
</dbReference>
<dbReference type="InterPro" id="IPR031157">
    <property type="entry name" value="G_TR_CS"/>
</dbReference>
<dbReference type="InterPro" id="IPR027417">
    <property type="entry name" value="P-loop_NTPase"/>
</dbReference>
<dbReference type="InterPro" id="IPR005225">
    <property type="entry name" value="Small_GTP-bd"/>
</dbReference>
<dbReference type="InterPro" id="IPR000795">
    <property type="entry name" value="T_Tr_GTP-bd_dom"/>
</dbReference>
<dbReference type="InterPro" id="IPR009000">
    <property type="entry name" value="Transl_B-barrel_sf"/>
</dbReference>
<dbReference type="InterPro" id="IPR009001">
    <property type="entry name" value="Transl_elong_EF1A/Init_IF2_C"/>
</dbReference>
<dbReference type="InterPro" id="IPR004541">
    <property type="entry name" value="Transl_elong_EFTu/EF1A_bac/org"/>
</dbReference>
<dbReference type="InterPro" id="IPR004160">
    <property type="entry name" value="Transl_elong_EFTu/EF1A_C"/>
</dbReference>
<dbReference type="NCBIfam" id="TIGR00485">
    <property type="entry name" value="EF-Tu"/>
    <property type="match status" value="1"/>
</dbReference>
<dbReference type="NCBIfam" id="NF000766">
    <property type="entry name" value="PRK00049.1"/>
    <property type="match status" value="1"/>
</dbReference>
<dbReference type="NCBIfam" id="NF009372">
    <property type="entry name" value="PRK12735.1"/>
    <property type="match status" value="1"/>
</dbReference>
<dbReference type="NCBIfam" id="NF009373">
    <property type="entry name" value="PRK12736.1"/>
    <property type="match status" value="1"/>
</dbReference>
<dbReference type="NCBIfam" id="TIGR00231">
    <property type="entry name" value="small_GTP"/>
    <property type="match status" value="1"/>
</dbReference>
<dbReference type="PANTHER" id="PTHR43721:SF22">
    <property type="entry name" value="ELONGATION FACTOR TU, MITOCHONDRIAL"/>
    <property type="match status" value="1"/>
</dbReference>
<dbReference type="PANTHER" id="PTHR43721">
    <property type="entry name" value="ELONGATION FACTOR TU-RELATED"/>
    <property type="match status" value="1"/>
</dbReference>
<dbReference type="Pfam" id="PF00009">
    <property type="entry name" value="GTP_EFTU"/>
    <property type="match status" value="1"/>
</dbReference>
<dbReference type="Pfam" id="PF03144">
    <property type="entry name" value="GTP_EFTU_D2"/>
    <property type="match status" value="1"/>
</dbReference>
<dbReference type="Pfam" id="PF03143">
    <property type="entry name" value="GTP_EFTU_D3"/>
    <property type="match status" value="1"/>
</dbReference>
<dbReference type="PRINTS" id="PR00315">
    <property type="entry name" value="ELONGATNFCT"/>
</dbReference>
<dbReference type="SUPFAM" id="SSF50465">
    <property type="entry name" value="EF-Tu/eEF-1alpha/eIF2-gamma C-terminal domain"/>
    <property type="match status" value="1"/>
</dbReference>
<dbReference type="SUPFAM" id="SSF52540">
    <property type="entry name" value="P-loop containing nucleoside triphosphate hydrolases"/>
    <property type="match status" value="1"/>
</dbReference>
<dbReference type="SUPFAM" id="SSF50447">
    <property type="entry name" value="Translation proteins"/>
    <property type="match status" value="1"/>
</dbReference>
<dbReference type="PROSITE" id="PS00301">
    <property type="entry name" value="G_TR_1"/>
    <property type="match status" value="1"/>
</dbReference>
<dbReference type="PROSITE" id="PS51722">
    <property type="entry name" value="G_TR_2"/>
    <property type="match status" value="1"/>
</dbReference>
<reference key="1">
    <citation type="journal article" date="2003" name="DNA Res.">
        <title>Complete sequence and analysis of the plastid genome of the unicellular red alga Cyanidioschyzon merolae.</title>
        <authorList>
            <person name="Ohta N."/>
            <person name="Matsuzaki M."/>
            <person name="Misumi O."/>
            <person name="Miyagishima S.-Y."/>
            <person name="Nozaki H."/>
            <person name="Tanaka K."/>
            <person name="Shin-i T."/>
            <person name="Kohara Y."/>
            <person name="Kuroiwa T."/>
        </authorList>
    </citation>
    <scope>NUCLEOTIDE SEQUENCE [LARGE SCALE GENOMIC DNA]</scope>
    <source>
        <strain>NIES-3377 / 10D</strain>
    </source>
</reference>
<comment type="function">
    <text evidence="2">GTP hydrolase that promotes the GTP-dependent binding of aminoacyl-tRNA to the A-site of ribosomes during protein biosynthesis.</text>
</comment>
<comment type="catalytic activity">
    <reaction evidence="2">
        <text>GTP + H2O = GDP + phosphate + H(+)</text>
        <dbReference type="Rhea" id="RHEA:19669"/>
        <dbReference type="ChEBI" id="CHEBI:15377"/>
        <dbReference type="ChEBI" id="CHEBI:15378"/>
        <dbReference type="ChEBI" id="CHEBI:37565"/>
        <dbReference type="ChEBI" id="CHEBI:43474"/>
        <dbReference type="ChEBI" id="CHEBI:58189"/>
        <dbReference type="EC" id="3.6.5.3"/>
    </reaction>
    <physiologicalReaction direction="left-to-right" evidence="2">
        <dbReference type="Rhea" id="RHEA:19670"/>
    </physiologicalReaction>
</comment>
<comment type="subcellular location">
    <subcellularLocation>
        <location>Plastid</location>
        <location>Chloroplast</location>
    </subcellularLocation>
</comment>
<comment type="similarity">
    <text evidence="3">Belongs to the TRAFAC class translation factor GTPase superfamily. Classic translation factor GTPase family. EF-Tu/EF-1A subfamily.</text>
</comment>
<sequence>MARTKFERTKPHVNIGTIGHVDHGKTTLTAAISAVLASKDNTVQLKKFEEIDSAPEERARGITINTSHVEYQTEKRHYAHVDCPGHADYVKNMITGAAQMDGAILVVSAADGPMPQTREHILLAKQVGVPSIVVFLNKADMVDDPELLELVELEVRELLSKYDFPGDTIPFVTGSALLALEACMKNPKIGEGKDKWVDKIFELMKIVDEYIPTPQRDVDKSFLMAVEDVFSITGRGTVATGRIERGRVKVGETIEIVGLKNTKTTTVTGLEMFQKTLDEGIAGDNVGVLLRGVQKTDIERGMVLAKPGSITPHTKFEAEVYVLTKEEGGRHTPFFPGYRPQFYVRTTDVTGTIEDFTADDGSKAEMVMPGDRIKMCVNLIYPVAIEQGMRFAIREGGRTVGAGVVTKILE</sequence>
<organism>
    <name type="scientific">Cyanidioschyzon merolae (strain NIES-3377 / 10D)</name>
    <name type="common">Unicellular red alga</name>
    <dbReference type="NCBI Taxonomy" id="280699"/>
    <lineage>
        <taxon>Eukaryota</taxon>
        <taxon>Rhodophyta</taxon>
        <taxon>Bangiophyceae</taxon>
        <taxon>Cyanidiales</taxon>
        <taxon>Cyanidiaceae</taxon>
        <taxon>Cyanidioschyzon</taxon>
    </lineage>
</organism>
<name>EFTU_CYAM1</name>
<gene>
    <name type="primary">tufA</name>
    <name type="synonym">tuf</name>
</gene>
<feature type="chain" id="PRO_0000091454" description="Elongation factor Tu, chloroplastic">
    <location>
        <begin position="1"/>
        <end position="410"/>
    </location>
</feature>
<feature type="domain" description="tr-type G">
    <location>
        <begin position="10"/>
        <end position="215"/>
    </location>
</feature>
<feature type="region of interest" description="G1" evidence="1">
    <location>
        <begin position="19"/>
        <end position="26"/>
    </location>
</feature>
<feature type="region of interest" description="G2" evidence="1">
    <location>
        <begin position="61"/>
        <end position="65"/>
    </location>
</feature>
<feature type="region of interest" description="G3" evidence="1">
    <location>
        <begin position="82"/>
        <end position="85"/>
    </location>
</feature>
<feature type="region of interest" description="G4" evidence="1">
    <location>
        <begin position="137"/>
        <end position="140"/>
    </location>
</feature>
<feature type="region of interest" description="G5" evidence="1">
    <location>
        <begin position="175"/>
        <end position="177"/>
    </location>
</feature>
<feature type="binding site" evidence="1">
    <location>
        <begin position="19"/>
        <end position="26"/>
    </location>
    <ligand>
        <name>GTP</name>
        <dbReference type="ChEBI" id="CHEBI:37565"/>
    </ligand>
</feature>
<feature type="binding site" evidence="2">
    <location>
        <position position="26"/>
    </location>
    <ligand>
        <name>Mg(2+)</name>
        <dbReference type="ChEBI" id="CHEBI:18420"/>
    </ligand>
</feature>
<feature type="binding site" evidence="1">
    <location>
        <begin position="82"/>
        <end position="86"/>
    </location>
    <ligand>
        <name>GTP</name>
        <dbReference type="ChEBI" id="CHEBI:37565"/>
    </ligand>
</feature>
<feature type="binding site" evidence="1">
    <location>
        <begin position="137"/>
        <end position="140"/>
    </location>
    <ligand>
        <name>GTP</name>
        <dbReference type="ChEBI" id="CHEBI:37565"/>
    </ligand>
</feature>
<protein>
    <recommendedName>
        <fullName>Elongation factor Tu, chloroplastic</fullName>
        <shortName>EF-Tu</shortName>
        <ecNumber evidence="2">3.6.5.3</ecNumber>
    </recommendedName>
</protein>
<accession>Q85FT7</accession>